<protein>
    <recommendedName>
        <fullName evidence="1">Acetate kinase</fullName>
        <ecNumber evidence="1">2.7.2.1</ecNumber>
    </recommendedName>
    <alternativeName>
        <fullName evidence="1">Acetokinase</fullName>
    </alternativeName>
</protein>
<organism>
    <name type="scientific">Yersinia pestis bv. Antiqua (strain Angola)</name>
    <dbReference type="NCBI Taxonomy" id="349746"/>
    <lineage>
        <taxon>Bacteria</taxon>
        <taxon>Pseudomonadati</taxon>
        <taxon>Pseudomonadota</taxon>
        <taxon>Gammaproteobacteria</taxon>
        <taxon>Enterobacterales</taxon>
        <taxon>Yersiniaceae</taxon>
        <taxon>Yersinia</taxon>
    </lineage>
</organism>
<keyword id="KW-0067">ATP-binding</keyword>
<keyword id="KW-0963">Cytoplasm</keyword>
<keyword id="KW-0418">Kinase</keyword>
<keyword id="KW-0460">Magnesium</keyword>
<keyword id="KW-0479">Metal-binding</keyword>
<keyword id="KW-0547">Nucleotide-binding</keyword>
<keyword id="KW-0808">Transferase</keyword>
<proteinExistence type="inferred from homology"/>
<dbReference type="EC" id="2.7.2.1" evidence="1"/>
<dbReference type="EMBL" id="CP000901">
    <property type="protein sequence ID" value="ABX84940.1"/>
    <property type="molecule type" value="Genomic_DNA"/>
</dbReference>
<dbReference type="RefSeq" id="WP_002210288.1">
    <property type="nucleotide sequence ID" value="NZ_CP009935.1"/>
</dbReference>
<dbReference type="SMR" id="A9R6M9"/>
<dbReference type="GeneID" id="57976126"/>
<dbReference type="KEGG" id="ypg:YpAngola_A1825"/>
<dbReference type="PATRIC" id="fig|349746.12.peg.2801"/>
<dbReference type="UniPathway" id="UPA00340">
    <property type="reaction ID" value="UER00458"/>
</dbReference>
<dbReference type="GO" id="GO:0005829">
    <property type="term" value="C:cytosol"/>
    <property type="evidence" value="ECO:0007669"/>
    <property type="project" value="TreeGrafter"/>
</dbReference>
<dbReference type="GO" id="GO:0008776">
    <property type="term" value="F:acetate kinase activity"/>
    <property type="evidence" value="ECO:0007669"/>
    <property type="project" value="UniProtKB-UniRule"/>
</dbReference>
<dbReference type="GO" id="GO:0005524">
    <property type="term" value="F:ATP binding"/>
    <property type="evidence" value="ECO:0007669"/>
    <property type="project" value="UniProtKB-KW"/>
</dbReference>
<dbReference type="GO" id="GO:0000287">
    <property type="term" value="F:magnesium ion binding"/>
    <property type="evidence" value="ECO:0007669"/>
    <property type="project" value="UniProtKB-UniRule"/>
</dbReference>
<dbReference type="GO" id="GO:0006083">
    <property type="term" value="P:acetate metabolic process"/>
    <property type="evidence" value="ECO:0007669"/>
    <property type="project" value="TreeGrafter"/>
</dbReference>
<dbReference type="GO" id="GO:0006085">
    <property type="term" value="P:acetyl-CoA biosynthetic process"/>
    <property type="evidence" value="ECO:0007669"/>
    <property type="project" value="UniProtKB-UniRule"/>
</dbReference>
<dbReference type="CDD" id="cd24010">
    <property type="entry name" value="ASKHA_NBD_AcK_PK"/>
    <property type="match status" value="1"/>
</dbReference>
<dbReference type="FunFam" id="3.30.420.40:FF:000041">
    <property type="entry name" value="Acetate kinase"/>
    <property type="match status" value="1"/>
</dbReference>
<dbReference type="FunFam" id="3.30.420.40:FF:000042">
    <property type="entry name" value="Acetate kinase"/>
    <property type="match status" value="1"/>
</dbReference>
<dbReference type="Gene3D" id="3.30.420.40">
    <property type="match status" value="2"/>
</dbReference>
<dbReference type="HAMAP" id="MF_00020">
    <property type="entry name" value="Acetate_kinase"/>
    <property type="match status" value="1"/>
</dbReference>
<dbReference type="InterPro" id="IPR004372">
    <property type="entry name" value="Ac/propionate_kinase"/>
</dbReference>
<dbReference type="InterPro" id="IPR000890">
    <property type="entry name" value="Aliphatic_acid_kin_short-chain"/>
</dbReference>
<dbReference type="InterPro" id="IPR023865">
    <property type="entry name" value="Aliphatic_acid_kinase_CS"/>
</dbReference>
<dbReference type="InterPro" id="IPR043129">
    <property type="entry name" value="ATPase_NBD"/>
</dbReference>
<dbReference type="NCBIfam" id="TIGR00016">
    <property type="entry name" value="ackA"/>
    <property type="match status" value="1"/>
</dbReference>
<dbReference type="PANTHER" id="PTHR21060">
    <property type="entry name" value="ACETATE KINASE"/>
    <property type="match status" value="1"/>
</dbReference>
<dbReference type="PANTHER" id="PTHR21060:SF21">
    <property type="entry name" value="ACETATE KINASE"/>
    <property type="match status" value="1"/>
</dbReference>
<dbReference type="Pfam" id="PF00871">
    <property type="entry name" value="Acetate_kinase"/>
    <property type="match status" value="1"/>
</dbReference>
<dbReference type="PIRSF" id="PIRSF000722">
    <property type="entry name" value="Acetate_prop_kin"/>
    <property type="match status" value="1"/>
</dbReference>
<dbReference type="PRINTS" id="PR00471">
    <property type="entry name" value="ACETATEKNASE"/>
</dbReference>
<dbReference type="SUPFAM" id="SSF53067">
    <property type="entry name" value="Actin-like ATPase domain"/>
    <property type="match status" value="2"/>
</dbReference>
<dbReference type="PROSITE" id="PS01075">
    <property type="entry name" value="ACETATE_KINASE_1"/>
    <property type="match status" value="1"/>
</dbReference>
<dbReference type="PROSITE" id="PS01076">
    <property type="entry name" value="ACETATE_KINASE_2"/>
    <property type="match status" value="1"/>
</dbReference>
<feature type="chain" id="PRO_1000090007" description="Acetate kinase">
    <location>
        <begin position="1"/>
        <end position="400"/>
    </location>
</feature>
<feature type="active site" description="Proton donor/acceptor" evidence="1">
    <location>
        <position position="150"/>
    </location>
</feature>
<feature type="binding site" evidence="1">
    <location>
        <position position="10"/>
    </location>
    <ligand>
        <name>Mg(2+)</name>
        <dbReference type="ChEBI" id="CHEBI:18420"/>
    </ligand>
</feature>
<feature type="binding site" evidence="1">
    <location>
        <position position="17"/>
    </location>
    <ligand>
        <name>ATP</name>
        <dbReference type="ChEBI" id="CHEBI:30616"/>
    </ligand>
</feature>
<feature type="binding site" evidence="1">
    <location>
        <position position="91"/>
    </location>
    <ligand>
        <name>substrate</name>
    </ligand>
</feature>
<feature type="binding site" evidence="1">
    <location>
        <begin position="210"/>
        <end position="214"/>
    </location>
    <ligand>
        <name>ATP</name>
        <dbReference type="ChEBI" id="CHEBI:30616"/>
    </ligand>
</feature>
<feature type="binding site" evidence="1">
    <location>
        <begin position="285"/>
        <end position="287"/>
    </location>
    <ligand>
        <name>ATP</name>
        <dbReference type="ChEBI" id="CHEBI:30616"/>
    </ligand>
</feature>
<feature type="binding site" evidence="1">
    <location>
        <begin position="333"/>
        <end position="337"/>
    </location>
    <ligand>
        <name>ATP</name>
        <dbReference type="ChEBI" id="CHEBI:30616"/>
    </ligand>
</feature>
<feature type="binding site" evidence="1">
    <location>
        <position position="387"/>
    </location>
    <ligand>
        <name>Mg(2+)</name>
        <dbReference type="ChEBI" id="CHEBI:18420"/>
    </ligand>
</feature>
<feature type="site" description="Transition state stabilizer" evidence="1">
    <location>
        <position position="182"/>
    </location>
</feature>
<feature type="site" description="Transition state stabilizer" evidence="1">
    <location>
        <position position="243"/>
    </location>
</feature>
<accession>A9R6M9</accession>
<name>ACKA_YERPG</name>
<sequence length="400" mass="43018">MSSKLVLVLNCGSSSLKFAIIDATNGEEHISGLAECFHLPEARIKWKVDGGKQEAALGAGAAHSEALNFIVNTILAQKPALSAQLTAIGHRIVHGGEKFTSSVIVTEDVIQGIKDSIPFAPLHNPAHLIGIAEALKSFPNLADKNVAVFDTAFHQTMPEESYLYALPYSLYKDHGIRRYGAHGTSHFYVSQEAAKILNKPLEELNVITCHLGNGGSVTAVRNGKCVDTSMGLTPLEGLVMGTRSGDLDPAIIFHLHDAMGMSVDQINTLLTKESGLLGLTEVTSDCRYVEDNYATKADAKRAMDVFCHRLAKYIGSYTALMDGRLDAVVFTGGIGENAAMVRELTLDKLGLLGFEIDHERNMAARFGKSGTITKDSSRLALVIPTNEELVIAQDAARLTA</sequence>
<gene>
    <name evidence="1" type="primary">ackA</name>
    <name type="ordered locus">YpAngola_A1825</name>
</gene>
<comment type="function">
    <text evidence="1">Catalyzes the formation of acetyl phosphate from acetate and ATP. Can also catalyze the reverse reaction.</text>
</comment>
<comment type="catalytic activity">
    <reaction evidence="1">
        <text>acetate + ATP = acetyl phosphate + ADP</text>
        <dbReference type="Rhea" id="RHEA:11352"/>
        <dbReference type="ChEBI" id="CHEBI:22191"/>
        <dbReference type="ChEBI" id="CHEBI:30089"/>
        <dbReference type="ChEBI" id="CHEBI:30616"/>
        <dbReference type="ChEBI" id="CHEBI:456216"/>
        <dbReference type="EC" id="2.7.2.1"/>
    </reaction>
</comment>
<comment type="cofactor">
    <cofactor evidence="1">
        <name>Mg(2+)</name>
        <dbReference type="ChEBI" id="CHEBI:18420"/>
    </cofactor>
    <cofactor evidence="1">
        <name>Mn(2+)</name>
        <dbReference type="ChEBI" id="CHEBI:29035"/>
    </cofactor>
    <text evidence="1">Mg(2+). Can also accept Mn(2+).</text>
</comment>
<comment type="pathway">
    <text evidence="1">Metabolic intermediate biosynthesis; acetyl-CoA biosynthesis; acetyl-CoA from acetate: step 1/2.</text>
</comment>
<comment type="subunit">
    <text evidence="1">Homodimer.</text>
</comment>
<comment type="subcellular location">
    <subcellularLocation>
        <location evidence="1">Cytoplasm</location>
    </subcellularLocation>
</comment>
<comment type="similarity">
    <text evidence="1">Belongs to the acetokinase family.</text>
</comment>
<reference key="1">
    <citation type="journal article" date="2010" name="J. Bacteriol.">
        <title>Genome sequence of the deep-rooted Yersinia pestis strain Angola reveals new insights into the evolution and pangenome of the plague bacterium.</title>
        <authorList>
            <person name="Eppinger M."/>
            <person name="Worsham P.L."/>
            <person name="Nikolich M.P."/>
            <person name="Riley D.R."/>
            <person name="Sebastian Y."/>
            <person name="Mou S."/>
            <person name="Achtman M."/>
            <person name="Lindler L.E."/>
            <person name="Ravel J."/>
        </authorList>
    </citation>
    <scope>NUCLEOTIDE SEQUENCE [LARGE SCALE GENOMIC DNA]</scope>
    <source>
        <strain>Angola</strain>
    </source>
</reference>
<evidence type="ECO:0000255" key="1">
    <source>
        <dbReference type="HAMAP-Rule" id="MF_00020"/>
    </source>
</evidence>